<comment type="function">
    <text evidence="1">Involved in the catabolism of homogentisate (2,5-dihydroxyphenylacetate or 2,5-OH-PhAc), a central intermediate in the degradation of phenylalanine and tyrosine. Catalyzes the oxidative ring cleavage of the aromatic ring of homogentisate to yield maleylacetoacetate.</text>
</comment>
<comment type="catalytic activity">
    <reaction evidence="1">
        <text>homogentisate + O2 = 4-maleylacetoacetate + H(+)</text>
        <dbReference type="Rhea" id="RHEA:15449"/>
        <dbReference type="ChEBI" id="CHEBI:15378"/>
        <dbReference type="ChEBI" id="CHEBI:15379"/>
        <dbReference type="ChEBI" id="CHEBI:16169"/>
        <dbReference type="ChEBI" id="CHEBI:17105"/>
        <dbReference type="EC" id="1.13.11.5"/>
    </reaction>
</comment>
<comment type="cofactor">
    <cofactor evidence="1">
        <name>Fe cation</name>
        <dbReference type="ChEBI" id="CHEBI:24875"/>
    </cofactor>
</comment>
<comment type="pathway">
    <text evidence="1">Amino-acid degradation; L-phenylalanine degradation; acetoacetate and fumarate from L-phenylalanine: step 4/6.</text>
</comment>
<comment type="subunit">
    <text evidence="1">Hexamer; dimer of trimers.</text>
</comment>
<comment type="similarity">
    <text evidence="1">Belongs to the homogentisate dioxygenase family.</text>
</comment>
<proteinExistence type="inferred from homology"/>
<accession>Q62I34</accession>
<name>HGD_BURMA</name>
<keyword id="KW-0223">Dioxygenase</keyword>
<keyword id="KW-0408">Iron</keyword>
<keyword id="KW-0479">Metal-binding</keyword>
<keyword id="KW-0560">Oxidoreductase</keyword>
<keyword id="KW-0585">Phenylalanine catabolism</keyword>
<keyword id="KW-1185">Reference proteome</keyword>
<keyword id="KW-0828">Tyrosine catabolism</keyword>
<evidence type="ECO:0000255" key="1">
    <source>
        <dbReference type="HAMAP-Rule" id="MF_00334"/>
    </source>
</evidence>
<dbReference type="EC" id="1.13.11.5" evidence="1"/>
<dbReference type="EMBL" id="CP000010">
    <property type="protein sequence ID" value="AAU49603.1"/>
    <property type="molecule type" value="Genomic_DNA"/>
</dbReference>
<dbReference type="RefSeq" id="YP_103636.1">
    <property type="nucleotide sequence ID" value="NC_006348.1"/>
</dbReference>
<dbReference type="SMR" id="Q62I34"/>
<dbReference type="KEGG" id="bma:BMA2056"/>
<dbReference type="PATRIC" id="fig|243160.12.peg.2124"/>
<dbReference type="eggNOG" id="COG3508">
    <property type="taxonomic scope" value="Bacteria"/>
</dbReference>
<dbReference type="HOGENOM" id="CLU_027174_0_0_4"/>
<dbReference type="UniPathway" id="UPA00139">
    <property type="reaction ID" value="UER00339"/>
</dbReference>
<dbReference type="Proteomes" id="UP000006693">
    <property type="component" value="Chromosome 1"/>
</dbReference>
<dbReference type="GO" id="GO:0005737">
    <property type="term" value="C:cytoplasm"/>
    <property type="evidence" value="ECO:0007669"/>
    <property type="project" value="TreeGrafter"/>
</dbReference>
<dbReference type="GO" id="GO:0004411">
    <property type="term" value="F:homogentisate 1,2-dioxygenase activity"/>
    <property type="evidence" value="ECO:0007669"/>
    <property type="project" value="UniProtKB-UniRule"/>
</dbReference>
<dbReference type="GO" id="GO:0005506">
    <property type="term" value="F:iron ion binding"/>
    <property type="evidence" value="ECO:0007669"/>
    <property type="project" value="UniProtKB-UniRule"/>
</dbReference>
<dbReference type="GO" id="GO:0006559">
    <property type="term" value="P:L-phenylalanine catabolic process"/>
    <property type="evidence" value="ECO:0007669"/>
    <property type="project" value="UniProtKB-UniRule"/>
</dbReference>
<dbReference type="GO" id="GO:0006572">
    <property type="term" value="P:tyrosine catabolic process"/>
    <property type="evidence" value="ECO:0007669"/>
    <property type="project" value="UniProtKB-UniRule"/>
</dbReference>
<dbReference type="CDD" id="cd07000">
    <property type="entry name" value="cupin_HGO_N"/>
    <property type="match status" value="1"/>
</dbReference>
<dbReference type="FunFam" id="2.60.120.10:FF:000034">
    <property type="entry name" value="Homogentisate 1,2-dioxygenase"/>
    <property type="match status" value="1"/>
</dbReference>
<dbReference type="Gene3D" id="2.60.120.10">
    <property type="entry name" value="Jelly Rolls"/>
    <property type="match status" value="1"/>
</dbReference>
<dbReference type="HAMAP" id="MF_00334">
    <property type="entry name" value="Homogentis_dioxygen"/>
    <property type="match status" value="1"/>
</dbReference>
<dbReference type="InterPro" id="IPR046451">
    <property type="entry name" value="HgmA_C"/>
</dbReference>
<dbReference type="InterPro" id="IPR046452">
    <property type="entry name" value="HgmA_N"/>
</dbReference>
<dbReference type="InterPro" id="IPR005708">
    <property type="entry name" value="Homogentis_dOase"/>
</dbReference>
<dbReference type="InterPro" id="IPR022950">
    <property type="entry name" value="Homogentis_dOase_bac"/>
</dbReference>
<dbReference type="InterPro" id="IPR014710">
    <property type="entry name" value="RmlC-like_jellyroll"/>
</dbReference>
<dbReference type="InterPro" id="IPR011051">
    <property type="entry name" value="RmlC_Cupin_sf"/>
</dbReference>
<dbReference type="NCBIfam" id="TIGR01015">
    <property type="entry name" value="hmgA"/>
    <property type="match status" value="1"/>
</dbReference>
<dbReference type="PANTHER" id="PTHR11056">
    <property type="entry name" value="HOMOGENTISATE 1,2-DIOXYGENASE"/>
    <property type="match status" value="1"/>
</dbReference>
<dbReference type="PANTHER" id="PTHR11056:SF0">
    <property type="entry name" value="HOMOGENTISATE 1,2-DIOXYGENASE"/>
    <property type="match status" value="1"/>
</dbReference>
<dbReference type="Pfam" id="PF04209">
    <property type="entry name" value="HgmA_C"/>
    <property type="match status" value="1"/>
</dbReference>
<dbReference type="Pfam" id="PF20510">
    <property type="entry name" value="HgmA_N"/>
    <property type="match status" value="1"/>
</dbReference>
<dbReference type="SUPFAM" id="SSF51182">
    <property type="entry name" value="RmlC-like cupins"/>
    <property type="match status" value="1"/>
</dbReference>
<feature type="chain" id="PRO_0000225785" description="Homogentisate 1,2-dioxygenase">
    <location>
        <begin position="1"/>
        <end position="450"/>
    </location>
</feature>
<feature type="active site" description="Proton acceptor" evidence="1">
    <location>
        <position position="304"/>
    </location>
</feature>
<feature type="binding site" evidence="1">
    <location>
        <position position="347"/>
    </location>
    <ligand>
        <name>Fe cation</name>
        <dbReference type="ChEBI" id="CHEBI:24875"/>
    </ligand>
</feature>
<feature type="binding site" evidence="1">
    <location>
        <position position="353"/>
    </location>
    <ligand>
        <name>Fe cation</name>
        <dbReference type="ChEBI" id="CHEBI:24875"/>
    </ligand>
</feature>
<feature type="binding site" evidence="1">
    <location>
        <position position="362"/>
    </location>
    <ligand>
        <name>homogentisate</name>
        <dbReference type="ChEBI" id="CHEBI:16169"/>
    </ligand>
</feature>
<feature type="binding site" evidence="1">
    <location>
        <position position="383"/>
    </location>
    <ligand>
        <name>Fe cation</name>
        <dbReference type="ChEBI" id="CHEBI:24875"/>
    </ligand>
</feature>
<feature type="binding site" evidence="1">
    <location>
        <position position="383"/>
    </location>
    <ligand>
        <name>homogentisate</name>
        <dbReference type="ChEBI" id="CHEBI:16169"/>
    </ligand>
</feature>
<gene>
    <name evidence="1" type="primary">hmgA</name>
    <name type="ordered locus">BMA2056</name>
</gene>
<reference key="1">
    <citation type="journal article" date="2004" name="Proc. Natl. Acad. Sci. U.S.A.">
        <title>Structural flexibility in the Burkholderia mallei genome.</title>
        <authorList>
            <person name="Nierman W.C."/>
            <person name="DeShazer D."/>
            <person name="Kim H.S."/>
            <person name="Tettelin H."/>
            <person name="Nelson K.E."/>
            <person name="Feldblyum T.V."/>
            <person name="Ulrich R.L."/>
            <person name="Ronning C.M."/>
            <person name="Brinkac L.M."/>
            <person name="Daugherty S.C."/>
            <person name="Davidsen T.D."/>
            <person name="DeBoy R.T."/>
            <person name="Dimitrov G."/>
            <person name="Dodson R.J."/>
            <person name="Durkin A.S."/>
            <person name="Gwinn M.L."/>
            <person name="Haft D.H."/>
            <person name="Khouri H.M."/>
            <person name="Kolonay J.F."/>
            <person name="Madupu R."/>
            <person name="Mohammoud Y."/>
            <person name="Nelson W.C."/>
            <person name="Radune D."/>
            <person name="Romero C.M."/>
            <person name="Sarria S."/>
            <person name="Selengut J."/>
            <person name="Shamblin C."/>
            <person name="Sullivan S.A."/>
            <person name="White O."/>
            <person name="Yu Y."/>
            <person name="Zafar N."/>
            <person name="Zhou L."/>
            <person name="Fraser C.M."/>
        </authorList>
    </citation>
    <scope>NUCLEOTIDE SEQUENCE [LARGE SCALE GENOMIC DNA]</scope>
    <source>
        <strain>ATCC 23344</strain>
    </source>
</reference>
<sequence length="450" mass="50130">MERTTIMTLDFSKPGEAGYQSGFANEFATEALPGALPHARNSPQRAPYGLYAEQFSGTAFTAPRGHNRRSWLYRIRPAAVHRPFELVSGERRIVAEFGDSDDVPPTPPNQLRWDPLPMPAQPTDFVDGWVTMAGNGSAAAMSGCAIHLYAANRSMRERFFYSADGELLIVPQEGRLFIMTELGRLDVEPFEIAVIPRGVRFAVALPDGRARGYVCENFGALLRLPDLGPIGSNGLANPRDFLTPHASYEDREGAFELVAKLNGRLWRADIDHSPFDVVAWHGNYAPYKYDLRHFNTIGSISYDHPDPSIFLVLQSQSDTPGVDAIDFVIFPPRWLAAEDTFRPPWFHRNVASEFMGLVHGVYDAKAEGFVPGGASLHNCMSGHGPDADTFEKASSIDTSKPNKVGDTMAFMFETRTLIRPTRFALDTAQLQANYFECWQGLKKHFNPEQR</sequence>
<organism>
    <name type="scientific">Burkholderia mallei (strain ATCC 23344)</name>
    <dbReference type="NCBI Taxonomy" id="243160"/>
    <lineage>
        <taxon>Bacteria</taxon>
        <taxon>Pseudomonadati</taxon>
        <taxon>Pseudomonadota</taxon>
        <taxon>Betaproteobacteria</taxon>
        <taxon>Burkholderiales</taxon>
        <taxon>Burkholderiaceae</taxon>
        <taxon>Burkholderia</taxon>
        <taxon>pseudomallei group</taxon>
    </lineage>
</organism>
<protein>
    <recommendedName>
        <fullName evidence="1">Homogentisate 1,2-dioxygenase</fullName>
        <shortName evidence="1">HGDO</shortName>
        <ecNumber evidence="1">1.13.11.5</ecNumber>
    </recommendedName>
    <alternativeName>
        <fullName evidence="1">Homogentisate oxygenase</fullName>
    </alternativeName>
    <alternativeName>
        <fullName evidence="1">Homogentisic acid oxidase</fullName>
    </alternativeName>
    <alternativeName>
        <fullName evidence="1">Homogentisicase</fullName>
    </alternativeName>
</protein>